<sequence length="90" mass="10596">MTRTVMCRKYQEELPGLERPPYPGAKGQDIFEHISQKAWADWQKHQTMLINEKRLNMMNAEDRKFLQAEMDKFFAGEEYAQAEGYVPPAE</sequence>
<accession>Q88R49</accession>
<comment type="function">
    <text evidence="1">Could be a mediator in iron transactions between iron acquisition and iron-requiring processes, such as synthesis and/or repair of Fe-S clusters in biosynthetic enzymes.</text>
</comment>
<comment type="similarity">
    <text evidence="1">Belongs to the Fe(2+)-trafficking protein family.</text>
</comment>
<gene>
    <name type="ordered locus">PP_0285</name>
</gene>
<proteinExistence type="inferred from homology"/>
<name>FETP_PSEPK</name>
<keyword id="KW-0408">Iron</keyword>
<keyword id="KW-1185">Reference proteome</keyword>
<feature type="chain" id="PRO_0000214499" description="Probable Fe(2+)-trafficking protein">
    <location>
        <begin position="1"/>
        <end position="90"/>
    </location>
</feature>
<protein>
    <recommendedName>
        <fullName evidence="1">Probable Fe(2+)-trafficking protein</fullName>
    </recommendedName>
</protein>
<reference key="1">
    <citation type="journal article" date="2002" name="Environ. Microbiol.">
        <title>Complete genome sequence and comparative analysis of the metabolically versatile Pseudomonas putida KT2440.</title>
        <authorList>
            <person name="Nelson K.E."/>
            <person name="Weinel C."/>
            <person name="Paulsen I.T."/>
            <person name="Dodson R.J."/>
            <person name="Hilbert H."/>
            <person name="Martins dos Santos V.A.P."/>
            <person name="Fouts D.E."/>
            <person name="Gill S.R."/>
            <person name="Pop M."/>
            <person name="Holmes M."/>
            <person name="Brinkac L.M."/>
            <person name="Beanan M.J."/>
            <person name="DeBoy R.T."/>
            <person name="Daugherty S.C."/>
            <person name="Kolonay J.F."/>
            <person name="Madupu R."/>
            <person name="Nelson W.C."/>
            <person name="White O."/>
            <person name="Peterson J.D."/>
            <person name="Khouri H.M."/>
            <person name="Hance I."/>
            <person name="Chris Lee P."/>
            <person name="Holtzapple E.K."/>
            <person name="Scanlan D."/>
            <person name="Tran K."/>
            <person name="Moazzez A."/>
            <person name="Utterback T.R."/>
            <person name="Rizzo M."/>
            <person name="Lee K."/>
            <person name="Kosack D."/>
            <person name="Moestl D."/>
            <person name="Wedler H."/>
            <person name="Lauber J."/>
            <person name="Stjepandic D."/>
            <person name="Hoheisel J."/>
            <person name="Straetz M."/>
            <person name="Heim S."/>
            <person name="Kiewitz C."/>
            <person name="Eisen J.A."/>
            <person name="Timmis K.N."/>
            <person name="Duesterhoeft A."/>
            <person name="Tuemmler B."/>
            <person name="Fraser C.M."/>
        </authorList>
    </citation>
    <scope>NUCLEOTIDE SEQUENCE [LARGE SCALE GENOMIC DNA]</scope>
    <source>
        <strain>ATCC 47054 / DSM 6125 / CFBP 8728 / NCIMB 11950 / KT2440</strain>
    </source>
</reference>
<evidence type="ECO:0000255" key="1">
    <source>
        <dbReference type="HAMAP-Rule" id="MF_00686"/>
    </source>
</evidence>
<dbReference type="EMBL" id="AE015451">
    <property type="protein sequence ID" value="AAN65916.1"/>
    <property type="molecule type" value="Genomic_DNA"/>
</dbReference>
<dbReference type="RefSeq" id="NP_742452.1">
    <property type="nucleotide sequence ID" value="NC_002947.4"/>
</dbReference>
<dbReference type="RefSeq" id="WP_003255742.1">
    <property type="nucleotide sequence ID" value="NZ_CP169744.1"/>
</dbReference>
<dbReference type="SMR" id="Q88R49"/>
<dbReference type="STRING" id="160488.PP_0285"/>
<dbReference type="PaxDb" id="160488-PP_0285"/>
<dbReference type="KEGG" id="ppu:PP_0285"/>
<dbReference type="PATRIC" id="fig|160488.4.peg.309"/>
<dbReference type="eggNOG" id="COG2924">
    <property type="taxonomic scope" value="Bacteria"/>
</dbReference>
<dbReference type="HOGENOM" id="CLU_170994_0_0_6"/>
<dbReference type="OrthoDB" id="9804318at2"/>
<dbReference type="PhylomeDB" id="Q88R49"/>
<dbReference type="BioCyc" id="PPUT160488:G1G01-316-MONOMER"/>
<dbReference type="Proteomes" id="UP000000556">
    <property type="component" value="Chromosome"/>
</dbReference>
<dbReference type="GO" id="GO:0005829">
    <property type="term" value="C:cytosol"/>
    <property type="evidence" value="ECO:0007669"/>
    <property type="project" value="TreeGrafter"/>
</dbReference>
<dbReference type="GO" id="GO:0005506">
    <property type="term" value="F:iron ion binding"/>
    <property type="evidence" value="ECO:0007669"/>
    <property type="project" value="UniProtKB-UniRule"/>
</dbReference>
<dbReference type="GO" id="GO:0034599">
    <property type="term" value="P:cellular response to oxidative stress"/>
    <property type="evidence" value="ECO:0007669"/>
    <property type="project" value="TreeGrafter"/>
</dbReference>
<dbReference type="FunFam" id="1.10.3880.10:FF:000001">
    <property type="entry name" value="Probable Fe(2+)-trafficking protein"/>
    <property type="match status" value="1"/>
</dbReference>
<dbReference type="Gene3D" id="1.10.3880.10">
    <property type="entry name" value="Fe(II) trafficking protein YggX"/>
    <property type="match status" value="1"/>
</dbReference>
<dbReference type="HAMAP" id="MF_00686">
    <property type="entry name" value="Fe_traffic_YggX"/>
    <property type="match status" value="1"/>
</dbReference>
<dbReference type="InterPro" id="IPR007457">
    <property type="entry name" value="Fe_traffick_prot_YggX"/>
</dbReference>
<dbReference type="InterPro" id="IPR036766">
    <property type="entry name" value="Fe_traffick_prot_YggX_sf"/>
</dbReference>
<dbReference type="NCBIfam" id="NF003817">
    <property type="entry name" value="PRK05408.1"/>
    <property type="match status" value="1"/>
</dbReference>
<dbReference type="PANTHER" id="PTHR36965">
    <property type="entry name" value="FE(2+)-TRAFFICKING PROTEIN-RELATED"/>
    <property type="match status" value="1"/>
</dbReference>
<dbReference type="PANTHER" id="PTHR36965:SF1">
    <property type="entry name" value="FE(2+)-TRAFFICKING PROTEIN-RELATED"/>
    <property type="match status" value="1"/>
</dbReference>
<dbReference type="Pfam" id="PF04362">
    <property type="entry name" value="Iron_traffic"/>
    <property type="match status" value="1"/>
</dbReference>
<dbReference type="PIRSF" id="PIRSF029827">
    <property type="entry name" value="Fe_traffic_YggX"/>
    <property type="match status" value="1"/>
</dbReference>
<dbReference type="SUPFAM" id="SSF111148">
    <property type="entry name" value="YggX-like"/>
    <property type="match status" value="1"/>
</dbReference>
<organism>
    <name type="scientific">Pseudomonas putida (strain ATCC 47054 / DSM 6125 / CFBP 8728 / NCIMB 11950 / KT2440)</name>
    <dbReference type="NCBI Taxonomy" id="160488"/>
    <lineage>
        <taxon>Bacteria</taxon>
        <taxon>Pseudomonadati</taxon>
        <taxon>Pseudomonadota</taxon>
        <taxon>Gammaproteobacteria</taxon>
        <taxon>Pseudomonadales</taxon>
        <taxon>Pseudomonadaceae</taxon>
        <taxon>Pseudomonas</taxon>
    </lineage>
</organism>